<dbReference type="EMBL" id="CP000439">
    <property type="protein sequence ID" value="ABK90375.1"/>
    <property type="molecule type" value="Genomic_DNA"/>
</dbReference>
<dbReference type="RefSeq" id="WP_003040510.1">
    <property type="nucleotide sequence ID" value="NC_008601.1"/>
</dbReference>
<dbReference type="SMR" id="A0Q810"/>
<dbReference type="KEGG" id="ftn:FTN_1510"/>
<dbReference type="KEGG" id="ftx:AW25_491"/>
<dbReference type="BioCyc" id="FTUL401614:G1G75-1558-MONOMER"/>
<dbReference type="Proteomes" id="UP000000762">
    <property type="component" value="Chromosome"/>
</dbReference>
<dbReference type="GO" id="GO:0005737">
    <property type="term" value="C:cytoplasm"/>
    <property type="evidence" value="ECO:0007669"/>
    <property type="project" value="UniProtKB-SubCell"/>
</dbReference>
<dbReference type="GO" id="GO:0051082">
    <property type="term" value="F:unfolded protein binding"/>
    <property type="evidence" value="ECO:0007669"/>
    <property type="project" value="InterPro"/>
</dbReference>
<dbReference type="GO" id="GO:0006457">
    <property type="term" value="P:protein folding"/>
    <property type="evidence" value="ECO:0007669"/>
    <property type="project" value="UniProtKB-UniRule"/>
</dbReference>
<dbReference type="GO" id="GO:0051262">
    <property type="term" value="P:protein tetramerization"/>
    <property type="evidence" value="ECO:0007669"/>
    <property type="project" value="InterPro"/>
</dbReference>
<dbReference type="GO" id="GO:0015031">
    <property type="term" value="P:protein transport"/>
    <property type="evidence" value="ECO:0007669"/>
    <property type="project" value="UniProtKB-UniRule"/>
</dbReference>
<dbReference type="Gene3D" id="3.10.420.10">
    <property type="entry name" value="SecB-like"/>
    <property type="match status" value="1"/>
</dbReference>
<dbReference type="HAMAP" id="MF_00821">
    <property type="entry name" value="SecB"/>
    <property type="match status" value="1"/>
</dbReference>
<dbReference type="InterPro" id="IPR003708">
    <property type="entry name" value="SecB"/>
</dbReference>
<dbReference type="InterPro" id="IPR035958">
    <property type="entry name" value="SecB-like_sf"/>
</dbReference>
<dbReference type="NCBIfam" id="NF004391">
    <property type="entry name" value="PRK05751.1-2"/>
    <property type="match status" value="1"/>
</dbReference>
<dbReference type="NCBIfam" id="TIGR00809">
    <property type="entry name" value="secB"/>
    <property type="match status" value="1"/>
</dbReference>
<dbReference type="PANTHER" id="PTHR36918">
    <property type="match status" value="1"/>
</dbReference>
<dbReference type="PANTHER" id="PTHR36918:SF1">
    <property type="entry name" value="PROTEIN-EXPORT PROTEIN SECB"/>
    <property type="match status" value="1"/>
</dbReference>
<dbReference type="Pfam" id="PF02556">
    <property type="entry name" value="SecB"/>
    <property type="match status" value="1"/>
</dbReference>
<dbReference type="PRINTS" id="PR01594">
    <property type="entry name" value="SECBCHAPRONE"/>
</dbReference>
<dbReference type="SUPFAM" id="SSF54611">
    <property type="entry name" value="SecB-like"/>
    <property type="match status" value="1"/>
</dbReference>
<sequence length="147" mass="16696">MQNNEIQPSFLIQKVYTKDVSFETINSPACFKEQWNPSSDFNIDINTTKINNENFELDLTITVTTKNNETNVYIAEVTQSGIFTITGMSEEQIDSVLNTYCANTLFPYAKRIIDSSIIKGGFLPLNLAPINFDAIYLQKKSSPKREH</sequence>
<comment type="function">
    <text evidence="1">One of the proteins required for the normal export of preproteins out of the cell cytoplasm. It is a molecular chaperone that binds to a subset of precursor proteins, maintaining them in a translocation-competent state. It also specifically binds to its receptor SecA.</text>
</comment>
<comment type="subunit">
    <text evidence="1">Homotetramer, a dimer of dimers. One homotetramer interacts with 1 SecA dimer.</text>
</comment>
<comment type="subcellular location">
    <subcellularLocation>
        <location evidence="1">Cytoplasm</location>
    </subcellularLocation>
</comment>
<comment type="similarity">
    <text evidence="1">Belongs to the SecB family.</text>
</comment>
<gene>
    <name evidence="1" type="primary">secB2</name>
    <name type="ordered locus">FTN_1510</name>
</gene>
<name>SECB2_FRATN</name>
<evidence type="ECO:0000255" key="1">
    <source>
        <dbReference type="HAMAP-Rule" id="MF_00821"/>
    </source>
</evidence>
<organism>
    <name type="scientific">Francisella tularensis subsp. novicida (strain U112)</name>
    <dbReference type="NCBI Taxonomy" id="401614"/>
    <lineage>
        <taxon>Bacteria</taxon>
        <taxon>Pseudomonadati</taxon>
        <taxon>Pseudomonadota</taxon>
        <taxon>Gammaproteobacteria</taxon>
        <taxon>Thiotrichales</taxon>
        <taxon>Francisellaceae</taxon>
        <taxon>Francisella</taxon>
    </lineage>
</organism>
<accession>A0Q810</accession>
<reference key="1">
    <citation type="journal article" date="2007" name="Genome Biol.">
        <title>Comparison of Francisella tularensis genomes reveals evolutionary events associated with the emergence of human pathogenic strains.</title>
        <authorList>
            <person name="Rohmer L."/>
            <person name="Fong C."/>
            <person name="Abmayr S."/>
            <person name="Wasnick M."/>
            <person name="Larson Freeman T.J."/>
            <person name="Radey M."/>
            <person name="Guina T."/>
            <person name="Svensson K."/>
            <person name="Hayden H.S."/>
            <person name="Jacobs M."/>
            <person name="Gallagher L.A."/>
            <person name="Manoil C."/>
            <person name="Ernst R.K."/>
            <person name="Drees B."/>
            <person name="Buckley D."/>
            <person name="Haugen E."/>
            <person name="Bovee D."/>
            <person name="Zhou Y."/>
            <person name="Chang J."/>
            <person name="Levy R."/>
            <person name="Lim R."/>
            <person name="Gillett W."/>
            <person name="Guenthener D."/>
            <person name="Kang A."/>
            <person name="Shaffer S.A."/>
            <person name="Taylor G."/>
            <person name="Chen J."/>
            <person name="Gallis B."/>
            <person name="D'Argenio D.A."/>
            <person name="Forsman M."/>
            <person name="Olson M.V."/>
            <person name="Goodlett D.R."/>
            <person name="Kaul R."/>
            <person name="Miller S.I."/>
            <person name="Brittnacher M.J."/>
        </authorList>
    </citation>
    <scope>NUCLEOTIDE SEQUENCE [LARGE SCALE GENOMIC DNA]</scope>
    <source>
        <strain>U112</strain>
    </source>
</reference>
<protein>
    <recommendedName>
        <fullName evidence="1">Protein-export protein SecB 2</fullName>
    </recommendedName>
</protein>
<feature type="chain" id="PRO_0000318232" description="Protein-export protein SecB 2">
    <location>
        <begin position="1"/>
        <end position="147"/>
    </location>
</feature>
<keyword id="KW-0143">Chaperone</keyword>
<keyword id="KW-0963">Cytoplasm</keyword>
<keyword id="KW-0653">Protein transport</keyword>
<keyword id="KW-0811">Translocation</keyword>
<keyword id="KW-0813">Transport</keyword>
<proteinExistence type="inferred from homology"/>